<evidence type="ECO:0000255" key="1">
    <source>
        <dbReference type="HAMAP-Rule" id="MF_01367"/>
    </source>
</evidence>
<evidence type="ECO:0000305" key="2"/>
<reference key="1">
    <citation type="journal article" date="2003" name="Nature">
        <title>Genome sequence of Bacillus cereus and comparative analysis with Bacillus anthracis.</title>
        <authorList>
            <person name="Ivanova N."/>
            <person name="Sorokin A."/>
            <person name="Anderson I."/>
            <person name="Galleron N."/>
            <person name="Candelon B."/>
            <person name="Kapatral V."/>
            <person name="Bhattacharyya A."/>
            <person name="Reznik G."/>
            <person name="Mikhailova N."/>
            <person name="Lapidus A."/>
            <person name="Chu L."/>
            <person name="Mazur M."/>
            <person name="Goltsman E."/>
            <person name="Larsen N."/>
            <person name="D'Souza M."/>
            <person name="Walunas T."/>
            <person name="Grechkin Y."/>
            <person name="Pusch G."/>
            <person name="Haselkorn R."/>
            <person name="Fonstein M."/>
            <person name="Ehrlich S.D."/>
            <person name="Overbeek R."/>
            <person name="Kyrpides N.C."/>
        </authorList>
    </citation>
    <scope>NUCLEOTIDE SEQUENCE [LARGE SCALE GENOMIC DNA]</scope>
    <source>
        <strain>ATCC 14579 / DSM 31 / CCUG 7414 / JCM 2152 / NBRC 15305 / NCIMB 9373 / NCTC 2599 / NRRL B-3711</strain>
    </source>
</reference>
<organism>
    <name type="scientific">Bacillus cereus (strain ATCC 14579 / DSM 31 / CCUG 7414 / JCM 2152 / NBRC 15305 / NCIMB 9373 / NCTC 2599 / NRRL B-3711)</name>
    <dbReference type="NCBI Taxonomy" id="226900"/>
    <lineage>
        <taxon>Bacteria</taxon>
        <taxon>Bacillati</taxon>
        <taxon>Bacillota</taxon>
        <taxon>Bacilli</taxon>
        <taxon>Bacillales</taxon>
        <taxon>Bacillaceae</taxon>
        <taxon>Bacillus</taxon>
        <taxon>Bacillus cereus group</taxon>
    </lineage>
</organism>
<accession>Q81J32</accession>
<name>RL14_BACCR</name>
<dbReference type="EMBL" id="AE016877">
    <property type="protein sequence ID" value="AAP07222.1"/>
    <property type="molecule type" value="Genomic_DNA"/>
</dbReference>
<dbReference type="RefSeq" id="NP_830021.1">
    <property type="nucleotide sequence ID" value="NC_004722.1"/>
</dbReference>
<dbReference type="RefSeq" id="WP_000615912.1">
    <property type="nucleotide sequence ID" value="NZ_CP138336.1"/>
</dbReference>
<dbReference type="SMR" id="Q81J32"/>
<dbReference type="STRING" id="226900.BC_0141"/>
<dbReference type="GeneID" id="93010933"/>
<dbReference type="KEGG" id="bce:BC0141"/>
<dbReference type="PATRIC" id="fig|226900.8.peg.142"/>
<dbReference type="HOGENOM" id="CLU_095071_2_1_9"/>
<dbReference type="OrthoDB" id="9806379at2"/>
<dbReference type="PRO" id="PR:Q81J32"/>
<dbReference type="Proteomes" id="UP000001417">
    <property type="component" value="Chromosome"/>
</dbReference>
<dbReference type="GO" id="GO:0022625">
    <property type="term" value="C:cytosolic large ribosomal subunit"/>
    <property type="evidence" value="ECO:0000318"/>
    <property type="project" value="GO_Central"/>
</dbReference>
<dbReference type="GO" id="GO:0070180">
    <property type="term" value="F:large ribosomal subunit rRNA binding"/>
    <property type="evidence" value="ECO:0000318"/>
    <property type="project" value="GO_Central"/>
</dbReference>
<dbReference type="GO" id="GO:0003735">
    <property type="term" value="F:structural constituent of ribosome"/>
    <property type="evidence" value="ECO:0000318"/>
    <property type="project" value="GO_Central"/>
</dbReference>
<dbReference type="GO" id="GO:0006412">
    <property type="term" value="P:translation"/>
    <property type="evidence" value="ECO:0007669"/>
    <property type="project" value="UniProtKB-UniRule"/>
</dbReference>
<dbReference type="CDD" id="cd00337">
    <property type="entry name" value="Ribosomal_uL14"/>
    <property type="match status" value="1"/>
</dbReference>
<dbReference type="FunFam" id="2.40.150.20:FF:000001">
    <property type="entry name" value="50S ribosomal protein L14"/>
    <property type="match status" value="1"/>
</dbReference>
<dbReference type="Gene3D" id="2.40.150.20">
    <property type="entry name" value="Ribosomal protein L14"/>
    <property type="match status" value="1"/>
</dbReference>
<dbReference type="HAMAP" id="MF_01367">
    <property type="entry name" value="Ribosomal_uL14"/>
    <property type="match status" value="1"/>
</dbReference>
<dbReference type="InterPro" id="IPR000218">
    <property type="entry name" value="Ribosomal_uL14"/>
</dbReference>
<dbReference type="InterPro" id="IPR005745">
    <property type="entry name" value="Ribosomal_uL14_bac-type"/>
</dbReference>
<dbReference type="InterPro" id="IPR019972">
    <property type="entry name" value="Ribosomal_uL14_CS"/>
</dbReference>
<dbReference type="InterPro" id="IPR036853">
    <property type="entry name" value="Ribosomal_uL14_sf"/>
</dbReference>
<dbReference type="NCBIfam" id="TIGR01067">
    <property type="entry name" value="rplN_bact"/>
    <property type="match status" value="1"/>
</dbReference>
<dbReference type="PANTHER" id="PTHR11761">
    <property type="entry name" value="50S/60S RIBOSOMAL PROTEIN L14/L23"/>
    <property type="match status" value="1"/>
</dbReference>
<dbReference type="PANTHER" id="PTHR11761:SF3">
    <property type="entry name" value="LARGE RIBOSOMAL SUBUNIT PROTEIN UL14M"/>
    <property type="match status" value="1"/>
</dbReference>
<dbReference type="Pfam" id="PF00238">
    <property type="entry name" value="Ribosomal_L14"/>
    <property type="match status" value="1"/>
</dbReference>
<dbReference type="SMART" id="SM01374">
    <property type="entry name" value="Ribosomal_L14"/>
    <property type="match status" value="1"/>
</dbReference>
<dbReference type="SUPFAM" id="SSF50193">
    <property type="entry name" value="Ribosomal protein L14"/>
    <property type="match status" value="1"/>
</dbReference>
<dbReference type="PROSITE" id="PS00049">
    <property type="entry name" value="RIBOSOMAL_L14"/>
    <property type="match status" value="1"/>
</dbReference>
<feature type="chain" id="PRO_1000055512" description="Large ribosomal subunit protein uL14">
    <location>
        <begin position="1"/>
        <end position="122"/>
    </location>
</feature>
<gene>
    <name evidence="1" type="primary">rplN</name>
    <name type="ordered locus">BC_0141</name>
</gene>
<comment type="function">
    <text evidence="1">Binds to 23S rRNA. Forms part of two intersubunit bridges in the 70S ribosome.</text>
</comment>
<comment type="subunit">
    <text evidence="1">Part of the 50S ribosomal subunit. Forms a cluster with proteins L3 and L19. In the 70S ribosome, L14 and L19 interact and together make contacts with the 16S rRNA in bridges B5 and B8.</text>
</comment>
<comment type="similarity">
    <text evidence="1">Belongs to the universal ribosomal protein uL14 family.</text>
</comment>
<protein>
    <recommendedName>
        <fullName evidence="1">Large ribosomal subunit protein uL14</fullName>
    </recommendedName>
    <alternativeName>
        <fullName evidence="2">50S ribosomal protein L14</fullName>
    </alternativeName>
</protein>
<keyword id="KW-1185">Reference proteome</keyword>
<keyword id="KW-0687">Ribonucleoprotein</keyword>
<keyword id="KW-0689">Ribosomal protein</keyword>
<keyword id="KW-0694">RNA-binding</keyword>
<keyword id="KW-0699">rRNA-binding</keyword>
<sequence>MIQQESRLKVADNSGARELLTIKVLGGSGRKYANIGDIIVATVKQATPGGVVKKGDVVKAVVVRTKSGARRPDGSYIKFDENAAVIIKDDKSPRGTRIFGPVARELRDSNFMKIVSLAPEVL</sequence>
<proteinExistence type="inferred from homology"/>